<keyword id="KW-0963">Cytoplasm</keyword>
<keyword id="KW-0396">Initiation factor</keyword>
<keyword id="KW-0597">Phosphoprotein</keyword>
<keyword id="KW-0648">Protein biosynthesis</keyword>
<keyword id="KW-1185">Reference proteome</keyword>
<keyword id="KW-0694">RNA-binding</keyword>
<name>EIF3A_DROSE</name>
<comment type="function">
    <text evidence="1">RNA-binding component of the eukaryotic translation initiation factor 3 (eIF-3) complex, which is involved in protein synthesis of a specialized repertoire of mRNAs and, together with other initiation factors, stimulates binding of mRNA and methionyl-tRNAi to the 40S ribosome. The eIF-3 complex specifically targets and initiates translation of a subset of mRNAs involved in cell proliferation.</text>
</comment>
<comment type="subunit">
    <text evidence="1">Component of the eukaryotic translation initiation factor 3 (eIF-3) complex. The eIF-3 complex interacts with pix.</text>
</comment>
<comment type="subcellular location">
    <subcellularLocation>
        <location evidence="1">Cytoplasm</location>
    </subcellularLocation>
</comment>
<comment type="similarity">
    <text evidence="1">Belongs to the eIF-3 subunit A family.</text>
</comment>
<comment type="sequence caution" evidence="4">
    <conflict type="erroneous gene model prediction">
        <sequence resource="EMBL-CDS" id="EDW54836"/>
    </conflict>
</comment>
<protein>
    <recommendedName>
        <fullName evidence="1">Eukaryotic translation initiation factor 3 subunit A</fullName>
        <shortName evidence="1">eIF3a</shortName>
    </recommendedName>
    <alternativeName>
        <fullName evidence="1">Eukaryotic translation initiation factor 3 subunit 10</fullName>
    </alternativeName>
</protein>
<feature type="chain" id="PRO_0000366341" description="Eukaryotic translation initiation factor 3 subunit A">
    <location>
        <begin position="1"/>
        <end position="1141"/>
    </location>
</feature>
<feature type="domain" description="PCI" evidence="2">
    <location>
        <begin position="319"/>
        <end position="501"/>
    </location>
</feature>
<feature type="region of interest" description="Disordered" evidence="3">
    <location>
        <begin position="588"/>
        <end position="631"/>
    </location>
</feature>
<feature type="region of interest" description="Disordered" evidence="3">
    <location>
        <begin position="829"/>
        <end position="1141"/>
    </location>
</feature>
<feature type="compositionally biased region" description="Basic and acidic residues" evidence="3">
    <location>
        <begin position="588"/>
        <end position="623"/>
    </location>
</feature>
<feature type="compositionally biased region" description="Basic and acidic residues" evidence="3">
    <location>
        <begin position="829"/>
        <end position="899"/>
    </location>
</feature>
<feature type="compositionally biased region" description="Basic and acidic residues" evidence="3">
    <location>
        <begin position="920"/>
        <end position="976"/>
    </location>
</feature>
<feature type="compositionally biased region" description="Basic and acidic residues" evidence="3">
    <location>
        <begin position="990"/>
        <end position="1051"/>
    </location>
</feature>
<feature type="compositionally biased region" description="Basic and acidic residues" evidence="3">
    <location>
        <begin position="1059"/>
        <end position="1087"/>
    </location>
</feature>
<feature type="compositionally biased region" description="Basic and acidic residues" evidence="3">
    <location>
        <begin position="1110"/>
        <end position="1131"/>
    </location>
</feature>
<feature type="modified residue" description="Phosphoserine" evidence="1">
    <location>
        <position position="908"/>
    </location>
</feature>
<gene>
    <name evidence="1" type="primary">eIF3a</name>
    <name evidence="1" type="synonym">eIF3-S10</name>
    <name type="ORF">GM10701</name>
</gene>
<reference key="1">
    <citation type="journal article" date="2007" name="Nature">
        <title>Evolution of genes and genomes on the Drosophila phylogeny.</title>
        <authorList>
            <consortium name="Drosophila 12 genomes consortium"/>
        </authorList>
    </citation>
    <scope>NUCLEOTIDE SEQUENCE [LARGE SCALE GENOMIC DNA]</scope>
    <source>
        <strain>Rob3c / Tucson 14021-0248.25</strain>
    </source>
</reference>
<dbReference type="EMBL" id="CH480821">
    <property type="protein sequence ID" value="EDW54836.1"/>
    <property type="status" value="ALT_SEQ"/>
    <property type="molecule type" value="Genomic_DNA"/>
</dbReference>
<dbReference type="RefSeq" id="XP_002038299.1">
    <property type="nucleotide sequence ID" value="XM_002038263.1"/>
</dbReference>
<dbReference type="SMR" id="B4I3P3"/>
<dbReference type="STRING" id="7238.B4I3P3"/>
<dbReference type="EnsemblMetazoa" id="XM_032723211.1">
    <property type="protein sequence ID" value="XP_032579102.1"/>
    <property type="gene ID" value="LOC116801771"/>
</dbReference>
<dbReference type="ChiTaRS" id="eIF3-S10">
    <property type="organism name" value="fly"/>
</dbReference>
<dbReference type="Proteomes" id="UP000001292">
    <property type="component" value="Unassembled WGS sequence"/>
</dbReference>
<dbReference type="GO" id="GO:0016282">
    <property type="term" value="C:eukaryotic 43S preinitiation complex"/>
    <property type="evidence" value="ECO:0007669"/>
    <property type="project" value="UniProtKB-UniRule"/>
</dbReference>
<dbReference type="GO" id="GO:0033290">
    <property type="term" value="C:eukaryotic 48S preinitiation complex"/>
    <property type="evidence" value="ECO:0007669"/>
    <property type="project" value="UniProtKB-UniRule"/>
</dbReference>
<dbReference type="GO" id="GO:0005852">
    <property type="term" value="C:eukaryotic translation initiation factor 3 complex"/>
    <property type="evidence" value="ECO:0000250"/>
    <property type="project" value="UniProtKB"/>
</dbReference>
<dbReference type="GO" id="GO:0071540">
    <property type="term" value="C:eukaryotic translation initiation factor 3 complex, eIF3e"/>
    <property type="evidence" value="ECO:0007669"/>
    <property type="project" value="TreeGrafter"/>
</dbReference>
<dbReference type="GO" id="GO:0071541">
    <property type="term" value="C:eukaryotic translation initiation factor 3 complex, eIF3m"/>
    <property type="evidence" value="ECO:0007669"/>
    <property type="project" value="TreeGrafter"/>
</dbReference>
<dbReference type="GO" id="GO:0043614">
    <property type="term" value="C:multi-eIF complex"/>
    <property type="evidence" value="ECO:0007669"/>
    <property type="project" value="TreeGrafter"/>
</dbReference>
<dbReference type="GO" id="GO:0003729">
    <property type="term" value="F:mRNA binding"/>
    <property type="evidence" value="ECO:0007669"/>
    <property type="project" value="TreeGrafter"/>
</dbReference>
<dbReference type="GO" id="GO:0003743">
    <property type="term" value="F:translation initiation factor activity"/>
    <property type="evidence" value="ECO:0000250"/>
    <property type="project" value="UniProtKB"/>
</dbReference>
<dbReference type="GO" id="GO:0001732">
    <property type="term" value="P:formation of cytoplasmic translation initiation complex"/>
    <property type="evidence" value="ECO:0007669"/>
    <property type="project" value="UniProtKB-UniRule"/>
</dbReference>
<dbReference type="GO" id="GO:0006446">
    <property type="term" value="P:regulation of translational initiation"/>
    <property type="evidence" value="ECO:0000250"/>
    <property type="project" value="UniProtKB"/>
</dbReference>
<dbReference type="GO" id="GO:0002188">
    <property type="term" value="P:translation reinitiation"/>
    <property type="evidence" value="ECO:0007669"/>
    <property type="project" value="TreeGrafter"/>
</dbReference>
<dbReference type="FunFam" id="1.25.40.860:FF:000007">
    <property type="entry name" value="Eukaryotic translation initiation factor 3 subunit A"/>
    <property type="match status" value="1"/>
</dbReference>
<dbReference type="FunFam" id="4.10.860.10:FF:000001">
    <property type="entry name" value="Eukaryotic translation initiation factor 3 subunit A"/>
    <property type="match status" value="1"/>
</dbReference>
<dbReference type="Gene3D" id="1.25.40.860">
    <property type="match status" value="2"/>
</dbReference>
<dbReference type="Gene3D" id="4.10.860.10">
    <property type="entry name" value="UVR domain"/>
    <property type="match status" value="1"/>
</dbReference>
<dbReference type="HAMAP" id="MF_03000">
    <property type="entry name" value="eIF3a"/>
    <property type="match status" value="1"/>
</dbReference>
<dbReference type="InterPro" id="IPR027512">
    <property type="entry name" value="EIF3A"/>
</dbReference>
<dbReference type="InterPro" id="IPR054711">
    <property type="entry name" value="eIF3a_PCI_TPR-like"/>
</dbReference>
<dbReference type="InterPro" id="IPR000717">
    <property type="entry name" value="PCI_dom"/>
</dbReference>
<dbReference type="PANTHER" id="PTHR14005:SF0">
    <property type="entry name" value="EUKARYOTIC TRANSLATION INITIATION FACTOR 3 SUBUNIT A"/>
    <property type="match status" value="1"/>
</dbReference>
<dbReference type="PANTHER" id="PTHR14005">
    <property type="entry name" value="EUKARYOTIC TRANSLATION INITIATION FACTOR 3, THETA SUBUNIT"/>
    <property type="match status" value="1"/>
</dbReference>
<dbReference type="Pfam" id="PF22591">
    <property type="entry name" value="eIF3a_PCI_TPR-like"/>
    <property type="match status" value="1"/>
</dbReference>
<dbReference type="Pfam" id="PF01399">
    <property type="entry name" value="PCI"/>
    <property type="match status" value="1"/>
</dbReference>
<dbReference type="PROSITE" id="PS50250">
    <property type="entry name" value="PCI"/>
    <property type="match status" value="1"/>
</dbReference>
<accession>B4I3P3</accession>
<evidence type="ECO:0000255" key="1">
    <source>
        <dbReference type="HAMAP-Rule" id="MF_03000"/>
    </source>
</evidence>
<evidence type="ECO:0000255" key="2">
    <source>
        <dbReference type="PROSITE-ProRule" id="PRU01185"/>
    </source>
</evidence>
<evidence type="ECO:0000256" key="3">
    <source>
        <dbReference type="SAM" id="MobiDB-lite"/>
    </source>
</evidence>
<evidence type="ECO:0000305" key="4"/>
<sequence>MARYTQRPENALKRANEFIEVGKPLRALDTLQEVFRNKRWNYAYSETVIEPLMFKYLYLCVELKKSHIAKEGLFQYRNMFQLVNVNSLENVIRGYLKMAEEHTEAAQAQSSAAVAVLELDDLDNIATPESILMSAVCGEDAQDRSDRTILLPWVKFLWESYCQCLELLRVNTHCEALYHDIARMAFQFCLKYNRKSEFRRLCDKLRKHLEDICKSSNQTTGVSINKVETQQLCLDTRLYLLDSAIQMELWQEAYKAIEDIHGLMALSKKTPVPKTMANYYQKLAMVFSKAGNQLFHAAALLKLFQLTRELKKNLTKDDLQRMAAHVLLATLSIPLPSAHPEFDRFIEADKSPLEKAQKLAVLLGLPQPPTRVSLIREVVRLNVPQLVSEDFRNLYNWLEVDFNPLNLCKRIQSIVDFIENGPENALLTPYIQSLKDVTIMRLIRQISQVYESIKFQRLLQLASFCNIFELEKLLVESVRHNDMQIRIDHQKNSIYFGTDLTESQREYRPDGPALQSMPSEQIRSQLVNMSTVLTRAVSIVYPNRERDQRAKLRNQMVSQYHEIKDREHQRILQRQKIIEDRKEYIEKQNNAREEEEARRQEEESRKAKLAEQKRLEQEQEERERKRHQNEIQAIREKSLKEKVQQISQTAHGKKMLSKLDEEGIKKLDAEQIAKRESEELQREAKELQSKLKSQEKKIDYFERAKRLEEIPLFEKYLAEKQVKDKEFWEATEKTRIENAIAERMDAVAQQERLKRMYPDRDEFLEALKKERASLYVEKLKKFEAALEAERKKRLADRIVRRREERRQAFLREKEEERLRKEEEIRLAQAAEERAAAEARRLEREAEDEKRRAQYEKQRAKEEEAERKIKEDRDRLSRELASERERTEKERDTWRPRGGDRPSASAGGSSEWRRAAPAVSERNDRGGERIERGGDRVERGGERIERGGERIERGGDRDRKDNEGADSSWRVRREPDTQRAAAPKDSGAPQSRDDKWRRGGERDRDFRNDGARRDRDDGPRRDRDDGPRRDRDDERGGFRRNDGPRRTDEPQRESGGNWRDAPRHADRENRRPAGERRDRDVRETRGDQRGSAPKEAASGGGGGNWRNAPATREEKPAAKRDQAQEKENKAGDDGEWTSVKRR</sequence>
<organism>
    <name type="scientific">Drosophila sechellia</name>
    <name type="common">Fruit fly</name>
    <dbReference type="NCBI Taxonomy" id="7238"/>
    <lineage>
        <taxon>Eukaryota</taxon>
        <taxon>Metazoa</taxon>
        <taxon>Ecdysozoa</taxon>
        <taxon>Arthropoda</taxon>
        <taxon>Hexapoda</taxon>
        <taxon>Insecta</taxon>
        <taxon>Pterygota</taxon>
        <taxon>Neoptera</taxon>
        <taxon>Endopterygota</taxon>
        <taxon>Diptera</taxon>
        <taxon>Brachycera</taxon>
        <taxon>Muscomorpha</taxon>
        <taxon>Ephydroidea</taxon>
        <taxon>Drosophilidae</taxon>
        <taxon>Drosophila</taxon>
        <taxon>Sophophora</taxon>
    </lineage>
</organism>
<proteinExistence type="inferred from homology"/>